<proteinExistence type="inferred from homology"/>
<comment type="function">
    <text evidence="2">One of the essential components for the initiation of protein synthesis. Protects formylmethionyl-tRNA from spontaneous hydrolysis and promotes its binding to the 30S ribosomal subunits. Also involved in the hydrolysis of GTP during the formation of the 70S ribosomal complex.</text>
</comment>
<comment type="subcellular location">
    <subcellularLocation>
        <location evidence="2">Cytoplasm</location>
    </subcellularLocation>
</comment>
<comment type="similarity">
    <text evidence="2">Belongs to the TRAFAC class translation factor GTPase superfamily. Classic translation factor GTPase family. IF-2 subfamily.</text>
</comment>
<organism>
    <name type="scientific">Streptococcus equi subsp. equi (strain 4047)</name>
    <dbReference type="NCBI Taxonomy" id="553482"/>
    <lineage>
        <taxon>Bacteria</taxon>
        <taxon>Bacillati</taxon>
        <taxon>Bacillota</taxon>
        <taxon>Bacilli</taxon>
        <taxon>Lactobacillales</taxon>
        <taxon>Streptococcaceae</taxon>
        <taxon>Streptococcus</taxon>
    </lineage>
</organism>
<evidence type="ECO:0000250" key="1"/>
<evidence type="ECO:0000255" key="2">
    <source>
        <dbReference type="HAMAP-Rule" id="MF_00100"/>
    </source>
</evidence>
<evidence type="ECO:0000256" key="3">
    <source>
        <dbReference type="SAM" id="MobiDB-lite"/>
    </source>
</evidence>
<accession>C0M8P7</accession>
<gene>
    <name evidence="2" type="primary">infB</name>
    <name type="ordered locus">SEQ_0518</name>
</gene>
<protein>
    <recommendedName>
        <fullName evidence="2">Translation initiation factor IF-2</fullName>
    </recommendedName>
</protein>
<sequence>MSKKRLHEIAKEIGKSSKEVVERAKSLGLDVKSHASSVEEADANKIASSFSAGVTKNVQAGSAKDKQVAEQKAKAAKATTPQPAASKAAEKPAAATQEASQPVAVKPKSRNFKAEREARAKEQVARRQAGQNRSNDRKSDYRQLGRSQGQQTERAGHKSQNQQRDRRFDNRPSSGNNRNDGHRQAGNRDKNRSFNANSRQQDTGRQGQTQAGAPKIDFKARAAALKAEQNAEYARQRESRFREQEEAKRLEQQARQEAKAAALKAQTEDKKHREASAKATESVASMAAASVAKPVDKRRKKQNRPDKGHDRDHGLEDGQKKNKKSWNSQNQVRNQKNSNWNNNKKNKKGKHHKNSNTAPKPVTERKFHELPKEFEYSEGMTVAEIAKRIKREPAEIVKKLFMMGVMATQNQSLDGDTIELLMVDYGIEAKAKVEVDEADIERFFTDDSYLNPENIVERAPVVTIMGHVDHGKTTLLDTLRNSRVATGEAGGITQHIGAYQIEEAGKKITFLDTPGHAAFTSMRARGASVTDITILIVAADDGVMPQTIEAINHSKAAGVPIIVAINKIDKPGANPERVISELAEHGIISTAWGGECEFVEISAKFNKNIDELLETVLLVAEVEELKADPTVRAIGTVIEARLDKGKGAVATLLVQQGTLHVQDPIVVGNTFGRVRAMTNDLGRRVKSAEPSTPVSITGLNETPMAGDHFAVYADEKAARAAGEERAKRALLKQRQNTQRVSLDNLFDTLKAGEIKTVNVIIKADVQGSVEALAASLLKIDVEGVRVNVVHSAVGAINESDVTLAEASNAVIIGFNVRPTPQARQQADTDDVEIRLHSIIYKVIEEVEEAMKGKLDPEYQEKMLGEAIIRETFKVSKVGTIGGFMVVNGKVTRDSSVRVIRDSVVIFDGKLASLKHYKDDVKEIGNAQEGGLMIEGFNDIKVDDTIEAYVMEEITRK</sequence>
<keyword id="KW-0963">Cytoplasm</keyword>
<keyword id="KW-0342">GTP-binding</keyword>
<keyword id="KW-0396">Initiation factor</keyword>
<keyword id="KW-0547">Nucleotide-binding</keyword>
<keyword id="KW-0648">Protein biosynthesis</keyword>
<reference key="1">
    <citation type="journal article" date="2009" name="PLoS Pathog.">
        <title>Genomic evidence for the evolution of Streptococcus equi: host restriction, increased virulence, and genetic exchange with human pathogens.</title>
        <authorList>
            <person name="Holden M.T.G."/>
            <person name="Heather Z."/>
            <person name="Paillot R."/>
            <person name="Steward K.F."/>
            <person name="Webb K."/>
            <person name="Ainslie F."/>
            <person name="Jourdan T."/>
            <person name="Bason N.C."/>
            <person name="Holroyd N.E."/>
            <person name="Mungall K."/>
            <person name="Quail M.A."/>
            <person name="Sanders M."/>
            <person name="Simmonds M."/>
            <person name="Willey D."/>
            <person name="Brooks K."/>
            <person name="Aanensen D.M."/>
            <person name="Spratt B.G."/>
            <person name="Jolley K.A."/>
            <person name="Maiden M.C.J."/>
            <person name="Kehoe M."/>
            <person name="Chanter N."/>
            <person name="Bentley S.D."/>
            <person name="Robinson C."/>
            <person name="Maskell D.J."/>
            <person name="Parkhill J."/>
            <person name="Waller A.S."/>
        </authorList>
    </citation>
    <scope>NUCLEOTIDE SEQUENCE [LARGE SCALE GENOMIC DNA]</scope>
    <source>
        <strain>4047</strain>
    </source>
</reference>
<name>IF2_STRE4</name>
<feature type="chain" id="PRO_1000190634" description="Translation initiation factor IF-2">
    <location>
        <begin position="1"/>
        <end position="956"/>
    </location>
</feature>
<feature type="domain" description="tr-type G">
    <location>
        <begin position="457"/>
        <end position="626"/>
    </location>
</feature>
<feature type="region of interest" description="Disordered" evidence="3">
    <location>
        <begin position="33"/>
        <end position="370"/>
    </location>
</feature>
<feature type="region of interest" description="G1" evidence="1">
    <location>
        <begin position="466"/>
        <end position="473"/>
    </location>
</feature>
<feature type="region of interest" description="G2" evidence="1">
    <location>
        <begin position="491"/>
        <end position="495"/>
    </location>
</feature>
<feature type="region of interest" description="G3" evidence="1">
    <location>
        <begin position="512"/>
        <end position="515"/>
    </location>
</feature>
<feature type="region of interest" description="G4" evidence="1">
    <location>
        <begin position="566"/>
        <end position="569"/>
    </location>
</feature>
<feature type="region of interest" description="G5" evidence="1">
    <location>
        <begin position="602"/>
        <end position="604"/>
    </location>
</feature>
<feature type="compositionally biased region" description="Polar residues" evidence="3">
    <location>
        <begin position="46"/>
        <end position="60"/>
    </location>
</feature>
<feature type="compositionally biased region" description="Basic and acidic residues" evidence="3">
    <location>
        <begin position="63"/>
        <end position="73"/>
    </location>
</feature>
<feature type="compositionally biased region" description="Low complexity" evidence="3">
    <location>
        <begin position="76"/>
        <end position="100"/>
    </location>
</feature>
<feature type="compositionally biased region" description="Basic and acidic residues" evidence="3">
    <location>
        <begin position="112"/>
        <end position="125"/>
    </location>
</feature>
<feature type="compositionally biased region" description="Basic and acidic residues" evidence="3">
    <location>
        <begin position="134"/>
        <end position="143"/>
    </location>
</feature>
<feature type="compositionally biased region" description="Basic and acidic residues" evidence="3">
    <location>
        <begin position="179"/>
        <end position="192"/>
    </location>
</feature>
<feature type="compositionally biased region" description="Low complexity" evidence="3">
    <location>
        <begin position="199"/>
        <end position="213"/>
    </location>
</feature>
<feature type="compositionally biased region" description="Basic and acidic residues" evidence="3">
    <location>
        <begin position="234"/>
        <end position="258"/>
    </location>
</feature>
<feature type="compositionally biased region" description="Basic and acidic residues" evidence="3">
    <location>
        <begin position="266"/>
        <end position="276"/>
    </location>
</feature>
<feature type="compositionally biased region" description="Low complexity" evidence="3">
    <location>
        <begin position="277"/>
        <end position="293"/>
    </location>
</feature>
<feature type="compositionally biased region" description="Basic and acidic residues" evidence="3">
    <location>
        <begin position="303"/>
        <end position="320"/>
    </location>
</feature>
<feature type="compositionally biased region" description="Low complexity" evidence="3">
    <location>
        <begin position="325"/>
        <end position="343"/>
    </location>
</feature>
<feature type="compositionally biased region" description="Basic residues" evidence="3">
    <location>
        <begin position="344"/>
        <end position="354"/>
    </location>
</feature>
<feature type="binding site" evidence="2">
    <location>
        <begin position="466"/>
        <end position="473"/>
    </location>
    <ligand>
        <name>GTP</name>
        <dbReference type="ChEBI" id="CHEBI:37565"/>
    </ligand>
</feature>
<feature type="binding site" evidence="2">
    <location>
        <begin position="512"/>
        <end position="516"/>
    </location>
    <ligand>
        <name>GTP</name>
        <dbReference type="ChEBI" id="CHEBI:37565"/>
    </ligand>
</feature>
<feature type="binding site" evidence="2">
    <location>
        <begin position="566"/>
        <end position="569"/>
    </location>
    <ligand>
        <name>GTP</name>
        <dbReference type="ChEBI" id="CHEBI:37565"/>
    </ligand>
</feature>
<dbReference type="EMBL" id="FM204883">
    <property type="protein sequence ID" value="CAW92747.1"/>
    <property type="molecule type" value="Genomic_DNA"/>
</dbReference>
<dbReference type="RefSeq" id="WP_012679100.1">
    <property type="nucleotide sequence ID" value="NC_012471.1"/>
</dbReference>
<dbReference type="SMR" id="C0M8P7"/>
<dbReference type="KEGG" id="seu:SEQ_0518"/>
<dbReference type="HOGENOM" id="CLU_006301_5_0_9"/>
<dbReference type="OrthoDB" id="9811804at2"/>
<dbReference type="Proteomes" id="UP000001365">
    <property type="component" value="Chromosome"/>
</dbReference>
<dbReference type="GO" id="GO:0005829">
    <property type="term" value="C:cytosol"/>
    <property type="evidence" value="ECO:0007669"/>
    <property type="project" value="TreeGrafter"/>
</dbReference>
<dbReference type="GO" id="GO:0005525">
    <property type="term" value="F:GTP binding"/>
    <property type="evidence" value="ECO:0007669"/>
    <property type="project" value="UniProtKB-KW"/>
</dbReference>
<dbReference type="GO" id="GO:0003924">
    <property type="term" value="F:GTPase activity"/>
    <property type="evidence" value="ECO:0007669"/>
    <property type="project" value="UniProtKB-UniRule"/>
</dbReference>
<dbReference type="GO" id="GO:0003743">
    <property type="term" value="F:translation initiation factor activity"/>
    <property type="evidence" value="ECO:0007669"/>
    <property type="project" value="UniProtKB-UniRule"/>
</dbReference>
<dbReference type="CDD" id="cd01887">
    <property type="entry name" value="IF2_eIF5B"/>
    <property type="match status" value="1"/>
</dbReference>
<dbReference type="CDD" id="cd03702">
    <property type="entry name" value="IF2_mtIF2_II"/>
    <property type="match status" value="1"/>
</dbReference>
<dbReference type="CDD" id="cd03692">
    <property type="entry name" value="mtIF2_IVc"/>
    <property type="match status" value="1"/>
</dbReference>
<dbReference type="FunFam" id="2.40.30.10:FF:000007">
    <property type="entry name" value="Translation initiation factor IF-2"/>
    <property type="match status" value="1"/>
</dbReference>
<dbReference type="FunFam" id="2.40.30.10:FF:000008">
    <property type="entry name" value="Translation initiation factor IF-2"/>
    <property type="match status" value="1"/>
</dbReference>
<dbReference type="FunFam" id="3.40.50.10050:FF:000001">
    <property type="entry name" value="Translation initiation factor IF-2"/>
    <property type="match status" value="1"/>
</dbReference>
<dbReference type="FunFam" id="3.40.50.300:FF:000019">
    <property type="entry name" value="Translation initiation factor IF-2"/>
    <property type="match status" value="1"/>
</dbReference>
<dbReference type="Gene3D" id="1.10.10.2480">
    <property type="match status" value="1"/>
</dbReference>
<dbReference type="Gene3D" id="3.40.50.300">
    <property type="entry name" value="P-loop containing nucleotide triphosphate hydrolases"/>
    <property type="match status" value="1"/>
</dbReference>
<dbReference type="Gene3D" id="2.40.30.10">
    <property type="entry name" value="Translation factors"/>
    <property type="match status" value="2"/>
</dbReference>
<dbReference type="Gene3D" id="3.40.50.10050">
    <property type="entry name" value="Translation initiation factor IF- 2, domain 3"/>
    <property type="match status" value="1"/>
</dbReference>
<dbReference type="HAMAP" id="MF_00100_B">
    <property type="entry name" value="IF_2_B"/>
    <property type="match status" value="1"/>
</dbReference>
<dbReference type="InterPro" id="IPR053905">
    <property type="entry name" value="EF-G-like_DII"/>
</dbReference>
<dbReference type="InterPro" id="IPR044145">
    <property type="entry name" value="IF2_II"/>
</dbReference>
<dbReference type="InterPro" id="IPR006847">
    <property type="entry name" value="IF2_N"/>
</dbReference>
<dbReference type="InterPro" id="IPR027417">
    <property type="entry name" value="P-loop_NTPase"/>
</dbReference>
<dbReference type="InterPro" id="IPR005225">
    <property type="entry name" value="Small_GTP-bd"/>
</dbReference>
<dbReference type="InterPro" id="IPR000795">
    <property type="entry name" value="T_Tr_GTP-bd_dom"/>
</dbReference>
<dbReference type="InterPro" id="IPR000178">
    <property type="entry name" value="TF_IF2_bacterial-like"/>
</dbReference>
<dbReference type="InterPro" id="IPR015760">
    <property type="entry name" value="TIF_IF2"/>
</dbReference>
<dbReference type="InterPro" id="IPR023115">
    <property type="entry name" value="TIF_IF2_dom3"/>
</dbReference>
<dbReference type="InterPro" id="IPR036925">
    <property type="entry name" value="TIF_IF2_dom3_sf"/>
</dbReference>
<dbReference type="InterPro" id="IPR009000">
    <property type="entry name" value="Transl_B-barrel_sf"/>
</dbReference>
<dbReference type="NCBIfam" id="TIGR00487">
    <property type="entry name" value="IF-2"/>
    <property type="match status" value="1"/>
</dbReference>
<dbReference type="NCBIfam" id="TIGR00231">
    <property type="entry name" value="small_GTP"/>
    <property type="match status" value="1"/>
</dbReference>
<dbReference type="PANTHER" id="PTHR43381:SF5">
    <property type="entry name" value="TR-TYPE G DOMAIN-CONTAINING PROTEIN"/>
    <property type="match status" value="1"/>
</dbReference>
<dbReference type="PANTHER" id="PTHR43381">
    <property type="entry name" value="TRANSLATION INITIATION FACTOR IF-2-RELATED"/>
    <property type="match status" value="1"/>
</dbReference>
<dbReference type="Pfam" id="PF22042">
    <property type="entry name" value="EF-G_D2"/>
    <property type="match status" value="1"/>
</dbReference>
<dbReference type="Pfam" id="PF00009">
    <property type="entry name" value="GTP_EFTU"/>
    <property type="match status" value="1"/>
</dbReference>
<dbReference type="Pfam" id="PF11987">
    <property type="entry name" value="IF-2"/>
    <property type="match status" value="1"/>
</dbReference>
<dbReference type="Pfam" id="PF04760">
    <property type="entry name" value="IF2_N"/>
    <property type="match status" value="2"/>
</dbReference>
<dbReference type="SUPFAM" id="SSF52156">
    <property type="entry name" value="Initiation factor IF2/eIF5b, domain 3"/>
    <property type="match status" value="1"/>
</dbReference>
<dbReference type="SUPFAM" id="SSF52540">
    <property type="entry name" value="P-loop containing nucleoside triphosphate hydrolases"/>
    <property type="match status" value="1"/>
</dbReference>
<dbReference type="SUPFAM" id="SSF50447">
    <property type="entry name" value="Translation proteins"/>
    <property type="match status" value="2"/>
</dbReference>
<dbReference type="PROSITE" id="PS51722">
    <property type="entry name" value="G_TR_2"/>
    <property type="match status" value="1"/>
</dbReference>
<dbReference type="PROSITE" id="PS01176">
    <property type="entry name" value="IF2"/>
    <property type="match status" value="1"/>
</dbReference>